<proteinExistence type="predicted"/>
<feature type="chain" id="PRO_0000198710" description="Myosin light chain alkali">
    <location>
        <begin position="1"/>
        <end position="155"/>
    </location>
</feature>
<feature type="domain" description="EF-hand 1" evidence="1">
    <location>
        <begin position="7"/>
        <end position="41"/>
    </location>
</feature>
<feature type="domain" description="EF-hand 2" evidence="1">
    <location>
        <begin position="80"/>
        <end position="115"/>
    </location>
</feature>
<feature type="splice variant" id="VSP_003368" description="In isoform Indirect flight muscle." evidence="2">
    <original>QFIQRLMSDPVVFD</original>
    <variation>PFLARMCERPDMLK</variation>
    <location>
        <begin position="142"/>
        <end position="155"/>
    </location>
</feature>
<comment type="subunit">
    <text>Myosin is a hexamer of 2 heavy chains and 4 light chains.</text>
</comment>
<comment type="alternative products">
    <event type="alternative splicing"/>
    <isoform>
        <id>Q24621-1</id>
        <name>Larval-adult</name>
        <name>Larval-non-IFM</name>
        <sequence type="displayed"/>
    </isoform>
    <isoform>
        <id>Q24621-2</id>
        <name>Indirect flight muscle</name>
        <name>Pupa</name>
        <name>Adult flight muscle</name>
        <sequence type="described" ref="VSP_003368"/>
    </isoform>
</comment>
<dbReference type="EMBL" id="L08052">
    <property type="protein sequence ID" value="AAA28691.1"/>
    <property type="molecule type" value="Genomic_DNA"/>
</dbReference>
<dbReference type="EMBL" id="L08052">
    <property type="protein sequence ID" value="AAA28690.1"/>
    <property type="molecule type" value="Genomic_DNA"/>
</dbReference>
<dbReference type="EMBL" id="CM000070">
    <property type="protein sequence ID" value="EAL27030.2"/>
    <property type="molecule type" value="Genomic_DNA"/>
</dbReference>
<dbReference type="RefSeq" id="XP_001357894.2">
    <property type="nucleotide sequence ID" value="XM_001357857.3"/>
</dbReference>
<dbReference type="RefSeq" id="XP_003736281.1">
    <property type="nucleotide sequence ID" value="XM_003736233.2"/>
</dbReference>
<dbReference type="SMR" id="Q24621"/>
<dbReference type="FunCoup" id="Q24621">
    <property type="interactions" value="21"/>
</dbReference>
<dbReference type="STRING" id="46245.Q24621"/>
<dbReference type="EnsemblMetazoa" id="FBtr0284283">
    <molecule id="Q24621-1"/>
    <property type="protein sequence ID" value="FBpp0282721"/>
    <property type="gene ID" value="FBgn0012706"/>
</dbReference>
<dbReference type="EnsemblMetazoa" id="FBtr0303349">
    <molecule id="Q24621-2"/>
    <property type="protein sequence ID" value="FBpp0292412"/>
    <property type="gene ID" value="FBgn0012706"/>
</dbReference>
<dbReference type="GeneID" id="4800662"/>
<dbReference type="KEGG" id="dpo:4800662"/>
<dbReference type="CTD" id="23209"/>
<dbReference type="eggNOG" id="KOG0030">
    <property type="taxonomic scope" value="Eukaryota"/>
</dbReference>
<dbReference type="HOGENOM" id="CLU_061288_13_3_1"/>
<dbReference type="InParanoid" id="Q24621"/>
<dbReference type="OMA" id="SLDCKPT"/>
<dbReference type="ChiTaRS" id="Mlc1">
    <property type="organism name" value="fly"/>
</dbReference>
<dbReference type="Proteomes" id="UP000001819">
    <property type="component" value="Chromosome 2"/>
</dbReference>
<dbReference type="Bgee" id="FBgn0012706">
    <property type="expression patterns" value="Expressed in adult organism and 3 other cell types or tissues"/>
</dbReference>
<dbReference type="GO" id="GO:0005859">
    <property type="term" value="C:muscle myosin complex"/>
    <property type="evidence" value="ECO:0000250"/>
    <property type="project" value="UniProtKB"/>
</dbReference>
<dbReference type="GO" id="GO:0005509">
    <property type="term" value="F:calcium ion binding"/>
    <property type="evidence" value="ECO:0007669"/>
    <property type="project" value="InterPro"/>
</dbReference>
<dbReference type="FunFam" id="1.10.238.10:FF:000286">
    <property type="entry name" value="Myosin alkali light chain 1"/>
    <property type="match status" value="1"/>
</dbReference>
<dbReference type="FunFam" id="1.10.238.10:FF:000267">
    <property type="entry name" value="Myosin light chain alkali"/>
    <property type="match status" value="1"/>
</dbReference>
<dbReference type="Gene3D" id="1.10.238.10">
    <property type="entry name" value="EF-hand"/>
    <property type="match status" value="2"/>
</dbReference>
<dbReference type="InterPro" id="IPR050230">
    <property type="entry name" value="CALM/Myosin/TropC-like"/>
</dbReference>
<dbReference type="InterPro" id="IPR011992">
    <property type="entry name" value="EF-hand-dom_pair"/>
</dbReference>
<dbReference type="InterPro" id="IPR002048">
    <property type="entry name" value="EF_hand_dom"/>
</dbReference>
<dbReference type="PANTHER" id="PTHR23048">
    <property type="entry name" value="MYOSIN LIGHT CHAIN 1, 3"/>
    <property type="match status" value="1"/>
</dbReference>
<dbReference type="PANTHER" id="PTHR23048:SF33">
    <property type="entry name" value="MYOSIN LIGHT CHAIN ALKALI"/>
    <property type="match status" value="1"/>
</dbReference>
<dbReference type="Pfam" id="PF13499">
    <property type="entry name" value="EF-hand_7"/>
    <property type="match status" value="1"/>
</dbReference>
<dbReference type="SUPFAM" id="SSF47473">
    <property type="entry name" value="EF-hand"/>
    <property type="match status" value="1"/>
</dbReference>
<dbReference type="PROSITE" id="PS50222">
    <property type="entry name" value="EF_HAND_2"/>
    <property type="match status" value="2"/>
</dbReference>
<name>MLC1_DROPS</name>
<organism>
    <name type="scientific">Drosophila pseudoobscura pseudoobscura</name>
    <name type="common">Fruit fly</name>
    <dbReference type="NCBI Taxonomy" id="46245"/>
    <lineage>
        <taxon>Eukaryota</taxon>
        <taxon>Metazoa</taxon>
        <taxon>Ecdysozoa</taxon>
        <taxon>Arthropoda</taxon>
        <taxon>Hexapoda</taxon>
        <taxon>Insecta</taxon>
        <taxon>Pterygota</taxon>
        <taxon>Neoptera</taxon>
        <taxon>Endopterygota</taxon>
        <taxon>Diptera</taxon>
        <taxon>Brachycera</taxon>
        <taxon>Muscomorpha</taxon>
        <taxon>Ephydroidea</taxon>
        <taxon>Drosophilidae</taxon>
        <taxon>Drosophila</taxon>
        <taxon>Sophophora</taxon>
    </lineage>
</organism>
<keyword id="KW-0025">Alternative splicing</keyword>
<keyword id="KW-0505">Motor protein</keyword>
<keyword id="KW-0514">Muscle protein</keyword>
<keyword id="KW-0518">Myosin</keyword>
<keyword id="KW-1185">Reference proteome</keyword>
<keyword id="KW-0677">Repeat</keyword>
<reference key="1">
    <citation type="journal article" date="1993" name="Mol. Biol. Evol.">
        <title>Conservation of alternative splicing and genomic organization of the myosin alkali light-chain (Mlc1) gene among Drosophila species.</title>
        <authorList>
            <person name="Leicht B.G."/>
            <person name="Lyckegaard E.M.S."/>
            <person name="Benedict C.M."/>
            <person name="Clark A.G."/>
        </authorList>
    </citation>
    <scope>NUCLEOTIDE SEQUENCE [GENOMIC DNA]</scope>
    <scope>ALTERNATIVE SPLICING</scope>
    <source>
        <tissue>Flight muscle</tissue>
        <tissue>Head</tissue>
        <tissue>Larva</tissue>
    </source>
</reference>
<reference key="2">
    <citation type="journal article" date="2005" name="Genome Res.">
        <title>Comparative genome sequencing of Drosophila pseudoobscura: chromosomal, gene, and cis-element evolution.</title>
        <authorList>
            <person name="Richards S."/>
            <person name="Liu Y."/>
            <person name="Bettencourt B.R."/>
            <person name="Hradecky P."/>
            <person name="Letovsky S."/>
            <person name="Nielsen R."/>
            <person name="Thornton K."/>
            <person name="Hubisz M.J."/>
            <person name="Chen R."/>
            <person name="Meisel R.P."/>
            <person name="Couronne O."/>
            <person name="Hua S."/>
            <person name="Smith M.A."/>
            <person name="Zhang P."/>
            <person name="Liu J."/>
            <person name="Bussemaker H.J."/>
            <person name="van Batenburg M.F."/>
            <person name="Howells S.L."/>
            <person name="Scherer S.E."/>
            <person name="Sodergren E."/>
            <person name="Matthews B.B."/>
            <person name="Crosby M.A."/>
            <person name="Schroeder A.J."/>
            <person name="Ortiz-Barrientos D."/>
            <person name="Rives C.M."/>
            <person name="Metzker M.L."/>
            <person name="Muzny D.M."/>
            <person name="Scott G."/>
            <person name="Steffen D."/>
            <person name="Wheeler D.A."/>
            <person name="Worley K.C."/>
            <person name="Havlak P."/>
            <person name="Durbin K.J."/>
            <person name="Egan A."/>
            <person name="Gill R."/>
            <person name="Hume J."/>
            <person name="Morgan M.B."/>
            <person name="Miner G."/>
            <person name="Hamilton C."/>
            <person name="Huang Y."/>
            <person name="Waldron L."/>
            <person name="Verduzco D."/>
            <person name="Clerc-Blankenburg K.P."/>
            <person name="Dubchak I."/>
            <person name="Noor M.A.F."/>
            <person name="Anderson W."/>
            <person name="White K.P."/>
            <person name="Clark A.G."/>
            <person name="Schaeffer S.W."/>
            <person name="Gelbart W.M."/>
            <person name="Weinstock G.M."/>
            <person name="Gibbs R.A."/>
        </authorList>
    </citation>
    <scope>NUCLEOTIDE SEQUENCE [LARGE SCALE GENOMIC DNA]</scope>
    <source>
        <strain>MV2-25 / Tucson 14011-0121.94</strain>
    </source>
</reference>
<evidence type="ECO:0000255" key="1">
    <source>
        <dbReference type="PROSITE-ProRule" id="PRU00448"/>
    </source>
</evidence>
<evidence type="ECO:0000305" key="2"/>
<sequence length="155" mass="17546">MADVPKREIENVEFVFEVMGSAGEGIDAVDLGDALRALNLNPTLALIEKMGGTKKRNEKKIKMDEFLPIYSQVKKEKEQGCYEDFIECLKLYDKEENGTMMLAELQHALLALGESLDDEQVETLFADCMDPEDDEGLIPYSQFIQRLMSDPVVFD</sequence>
<protein>
    <recommendedName>
        <fullName>Myosin light chain alkali</fullName>
    </recommendedName>
</protein>
<gene>
    <name type="primary">Mlc1</name>
    <name type="ORF">GA18996</name>
</gene>
<accession>Q24621</accession>
<accession>Q24620</accession>
<accession>Q29BG8</accession>